<comment type="function">
    <text evidence="1">Promotes RNA polymerase assembly. Latches the N- and C-terminal regions of the beta' subunit thereby facilitating its interaction with the beta and alpha subunits.</text>
</comment>
<comment type="catalytic activity">
    <reaction evidence="1">
        <text>RNA(n) + a ribonucleoside 5'-triphosphate = RNA(n+1) + diphosphate</text>
        <dbReference type="Rhea" id="RHEA:21248"/>
        <dbReference type="Rhea" id="RHEA-COMP:14527"/>
        <dbReference type="Rhea" id="RHEA-COMP:17342"/>
        <dbReference type="ChEBI" id="CHEBI:33019"/>
        <dbReference type="ChEBI" id="CHEBI:61557"/>
        <dbReference type="ChEBI" id="CHEBI:140395"/>
        <dbReference type="EC" id="2.7.7.6"/>
    </reaction>
</comment>
<comment type="subunit">
    <text evidence="1">The RNAP catalytic core consists of 2 alpha, 1 beta, 1 beta' and 1 omega subunit. When a sigma factor is associated with the core the holoenzyme is formed, which can initiate transcription.</text>
</comment>
<comment type="similarity">
    <text evidence="1">Belongs to the RNA polymerase subunit omega family.</text>
</comment>
<feature type="chain" id="PRO_1000133713" description="DNA-directed RNA polymerase subunit omega">
    <location>
        <begin position="1"/>
        <end position="88"/>
    </location>
</feature>
<evidence type="ECO:0000255" key="1">
    <source>
        <dbReference type="HAMAP-Rule" id="MF_00366"/>
    </source>
</evidence>
<gene>
    <name evidence="1" type="primary">rpoZ</name>
    <name type="ordered locus">A2cp1_3731</name>
</gene>
<dbReference type="EC" id="2.7.7.6" evidence="1"/>
<dbReference type="EMBL" id="CP001359">
    <property type="protein sequence ID" value="ACL67057.1"/>
    <property type="molecule type" value="Genomic_DNA"/>
</dbReference>
<dbReference type="RefSeq" id="WP_011422638.1">
    <property type="nucleotide sequence ID" value="NC_011891.1"/>
</dbReference>
<dbReference type="SMR" id="B8J6T5"/>
<dbReference type="KEGG" id="acp:A2cp1_3731"/>
<dbReference type="HOGENOM" id="CLU_125406_5_1_7"/>
<dbReference type="Proteomes" id="UP000007089">
    <property type="component" value="Chromosome"/>
</dbReference>
<dbReference type="GO" id="GO:0000428">
    <property type="term" value="C:DNA-directed RNA polymerase complex"/>
    <property type="evidence" value="ECO:0007669"/>
    <property type="project" value="UniProtKB-KW"/>
</dbReference>
<dbReference type="GO" id="GO:0003677">
    <property type="term" value="F:DNA binding"/>
    <property type="evidence" value="ECO:0007669"/>
    <property type="project" value="UniProtKB-UniRule"/>
</dbReference>
<dbReference type="GO" id="GO:0003899">
    <property type="term" value="F:DNA-directed RNA polymerase activity"/>
    <property type="evidence" value="ECO:0007669"/>
    <property type="project" value="UniProtKB-UniRule"/>
</dbReference>
<dbReference type="GO" id="GO:0006351">
    <property type="term" value="P:DNA-templated transcription"/>
    <property type="evidence" value="ECO:0007669"/>
    <property type="project" value="UniProtKB-UniRule"/>
</dbReference>
<dbReference type="Gene3D" id="3.90.940.10">
    <property type="match status" value="1"/>
</dbReference>
<dbReference type="HAMAP" id="MF_00366">
    <property type="entry name" value="RNApol_bact_RpoZ"/>
    <property type="match status" value="1"/>
</dbReference>
<dbReference type="InterPro" id="IPR003716">
    <property type="entry name" value="DNA-dir_RNA_pol_omega"/>
</dbReference>
<dbReference type="InterPro" id="IPR006110">
    <property type="entry name" value="Pol_omega/Rpo6/RPB6"/>
</dbReference>
<dbReference type="InterPro" id="IPR036161">
    <property type="entry name" value="RPB6/omega-like_sf"/>
</dbReference>
<dbReference type="NCBIfam" id="TIGR00690">
    <property type="entry name" value="rpoZ"/>
    <property type="match status" value="1"/>
</dbReference>
<dbReference type="PANTHER" id="PTHR34476">
    <property type="entry name" value="DNA-DIRECTED RNA POLYMERASE SUBUNIT OMEGA"/>
    <property type="match status" value="1"/>
</dbReference>
<dbReference type="PANTHER" id="PTHR34476:SF1">
    <property type="entry name" value="DNA-DIRECTED RNA POLYMERASE SUBUNIT OMEGA"/>
    <property type="match status" value="1"/>
</dbReference>
<dbReference type="Pfam" id="PF01192">
    <property type="entry name" value="RNA_pol_Rpb6"/>
    <property type="match status" value="1"/>
</dbReference>
<dbReference type="SMART" id="SM01409">
    <property type="entry name" value="RNA_pol_Rpb6"/>
    <property type="match status" value="1"/>
</dbReference>
<dbReference type="SUPFAM" id="SSF63562">
    <property type="entry name" value="RPB6/omega subunit-like"/>
    <property type="match status" value="1"/>
</dbReference>
<organism>
    <name type="scientific">Anaeromyxobacter dehalogenans (strain 2CP-1 / ATCC BAA-258)</name>
    <dbReference type="NCBI Taxonomy" id="455488"/>
    <lineage>
        <taxon>Bacteria</taxon>
        <taxon>Pseudomonadati</taxon>
        <taxon>Myxococcota</taxon>
        <taxon>Myxococcia</taxon>
        <taxon>Myxococcales</taxon>
        <taxon>Cystobacterineae</taxon>
        <taxon>Anaeromyxobacteraceae</taxon>
        <taxon>Anaeromyxobacter</taxon>
    </lineage>
</organism>
<proteinExistence type="inferred from homology"/>
<reference key="1">
    <citation type="submission" date="2009-01" db="EMBL/GenBank/DDBJ databases">
        <title>Complete sequence of Anaeromyxobacter dehalogenans 2CP-1.</title>
        <authorList>
            <person name="Lucas S."/>
            <person name="Copeland A."/>
            <person name="Lapidus A."/>
            <person name="Glavina del Rio T."/>
            <person name="Dalin E."/>
            <person name="Tice H."/>
            <person name="Bruce D."/>
            <person name="Goodwin L."/>
            <person name="Pitluck S."/>
            <person name="Saunders E."/>
            <person name="Brettin T."/>
            <person name="Detter J.C."/>
            <person name="Han C."/>
            <person name="Larimer F."/>
            <person name="Land M."/>
            <person name="Hauser L."/>
            <person name="Kyrpides N."/>
            <person name="Ovchinnikova G."/>
            <person name="Beliaev A.S."/>
            <person name="Richardson P."/>
        </authorList>
    </citation>
    <scope>NUCLEOTIDE SEQUENCE [LARGE SCALE GENOMIC DNA]</scope>
    <source>
        <strain>2CP-1 / ATCC BAA-258</strain>
    </source>
</reference>
<keyword id="KW-0240">DNA-directed RNA polymerase</keyword>
<keyword id="KW-0548">Nucleotidyltransferase</keyword>
<keyword id="KW-0804">Transcription</keyword>
<keyword id="KW-0808">Transferase</keyword>
<protein>
    <recommendedName>
        <fullName evidence="1">DNA-directed RNA polymerase subunit omega</fullName>
        <shortName evidence="1">RNAP omega subunit</shortName>
        <ecNumber evidence="1">2.7.7.6</ecNumber>
    </recommendedName>
    <alternativeName>
        <fullName evidence="1">RNA polymerase omega subunit</fullName>
    </alternativeName>
    <alternativeName>
        <fullName evidence="1">Transcriptase subunit omega</fullName>
    </alternativeName>
</protein>
<name>RPOZ_ANAD2</name>
<accession>B8J6T5</accession>
<sequence>MARVTVEDCLPMVDNRFALVLLATKRTRQLMAGARPLQAASKNKPPVLALREIATGKVRFDRSVRDALSGKFDKEKVNIPAGQTRTLR</sequence>